<evidence type="ECO:0000255" key="1">
    <source>
        <dbReference type="HAMAP-Rule" id="MF_01310"/>
    </source>
</evidence>
<evidence type="ECO:0000256" key="2">
    <source>
        <dbReference type="SAM" id="MobiDB-lite"/>
    </source>
</evidence>
<evidence type="ECO:0000305" key="3"/>
<name>RS11_MYCPU</name>
<keyword id="KW-1185">Reference proteome</keyword>
<keyword id="KW-0687">Ribonucleoprotein</keyword>
<keyword id="KW-0689">Ribosomal protein</keyword>
<keyword id="KW-0694">RNA-binding</keyword>
<keyword id="KW-0699">rRNA-binding</keyword>
<proteinExistence type="inferred from homology"/>
<accession>Q98Q07</accession>
<organism>
    <name type="scientific">Mycoplasmopsis pulmonis (strain UAB CTIP)</name>
    <name type="common">Mycoplasma pulmonis</name>
    <dbReference type="NCBI Taxonomy" id="272635"/>
    <lineage>
        <taxon>Bacteria</taxon>
        <taxon>Bacillati</taxon>
        <taxon>Mycoplasmatota</taxon>
        <taxon>Mycoplasmoidales</taxon>
        <taxon>Metamycoplasmataceae</taxon>
        <taxon>Mycoplasmopsis</taxon>
    </lineage>
</organism>
<sequence length="136" mass="14741">MAQRRSSQTTKKVKRKNVTNGVAHIHSTHNNTIVTFSDEKGNVISWASSGTIGYKGTKKKTAYAAGLAAQNASEKAKEHGIREVSVRVKGIGQGRDAARKQIEVSGISVSQIVDVTPQAHNGTRPPKRVLKREKAR</sequence>
<protein>
    <recommendedName>
        <fullName evidence="1">Small ribosomal subunit protein uS11</fullName>
    </recommendedName>
    <alternativeName>
        <fullName evidence="3">30S ribosomal protein S11</fullName>
    </alternativeName>
</protein>
<reference key="1">
    <citation type="journal article" date="2001" name="Nucleic Acids Res.">
        <title>The complete genome sequence of the murine respiratory pathogen Mycoplasma pulmonis.</title>
        <authorList>
            <person name="Chambaud I."/>
            <person name="Heilig R."/>
            <person name="Ferris S."/>
            <person name="Barbe V."/>
            <person name="Samson D."/>
            <person name="Galisson F."/>
            <person name="Moszer I."/>
            <person name="Dybvig K."/>
            <person name="Wroblewski H."/>
            <person name="Viari A."/>
            <person name="Rocha E.P.C."/>
            <person name="Blanchard A."/>
        </authorList>
    </citation>
    <scope>NUCLEOTIDE SEQUENCE [LARGE SCALE GENOMIC DNA]</scope>
    <source>
        <strain>UAB CTIP</strain>
    </source>
</reference>
<dbReference type="EMBL" id="AL445565">
    <property type="protein sequence ID" value="CAC13735.1"/>
    <property type="molecule type" value="Genomic_DNA"/>
</dbReference>
<dbReference type="PIR" id="B90582">
    <property type="entry name" value="B90582"/>
</dbReference>
<dbReference type="RefSeq" id="WP_010925363.1">
    <property type="nucleotide sequence ID" value="NC_002771.1"/>
</dbReference>
<dbReference type="SMR" id="Q98Q07"/>
<dbReference type="STRING" id="272635.gene:17577169"/>
<dbReference type="KEGG" id="mpu:MYPU_5620"/>
<dbReference type="eggNOG" id="COG0100">
    <property type="taxonomic scope" value="Bacteria"/>
</dbReference>
<dbReference type="HOGENOM" id="CLU_072439_5_0_14"/>
<dbReference type="BioCyc" id="MPUL272635:G1GT6-575-MONOMER"/>
<dbReference type="Proteomes" id="UP000000528">
    <property type="component" value="Chromosome"/>
</dbReference>
<dbReference type="GO" id="GO:1990904">
    <property type="term" value="C:ribonucleoprotein complex"/>
    <property type="evidence" value="ECO:0007669"/>
    <property type="project" value="UniProtKB-KW"/>
</dbReference>
<dbReference type="GO" id="GO:0005840">
    <property type="term" value="C:ribosome"/>
    <property type="evidence" value="ECO:0007669"/>
    <property type="project" value="UniProtKB-KW"/>
</dbReference>
<dbReference type="GO" id="GO:0019843">
    <property type="term" value="F:rRNA binding"/>
    <property type="evidence" value="ECO:0007669"/>
    <property type="project" value="UniProtKB-UniRule"/>
</dbReference>
<dbReference type="GO" id="GO:0003735">
    <property type="term" value="F:structural constituent of ribosome"/>
    <property type="evidence" value="ECO:0007669"/>
    <property type="project" value="InterPro"/>
</dbReference>
<dbReference type="GO" id="GO:0006412">
    <property type="term" value="P:translation"/>
    <property type="evidence" value="ECO:0007669"/>
    <property type="project" value="UniProtKB-UniRule"/>
</dbReference>
<dbReference type="Gene3D" id="3.30.420.80">
    <property type="entry name" value="Ribosomal protein S11"/>
    <property type="match status" value="1"/>
</dbReference>
<dbReference type="HAMAP" id="MF_01310">
    <property type="entry name" value="Ribosomal_uS11"/>
    <property type="match status" value="1"/>
</dbReference>
<dbReference type="InterPro" id="IPR001971">
    <property type="entry name" value="Ribosomal_uS11"/>
</dbReference>
<dbReference type="InterPro" id="IPR019981">
    <property type="entry name" value="Ribosomal_uS11_bac-type"/>
</dbReference>
<dbReference type="InterPro" id="IPR018102">
    <property type="entry name" value="Ribosomal_uS11_CS"/>
</dbReference>
<dbReference type="InterPro" id="IPR036967">
    <property type="entry name" value="Ribosomal_uS11_sf"/>
</dbReference>
<dbReference type="NCBIfam" id="NF003698">
    <property type="entry name" value="PRK05309.1"/>
    <property type="match status" value="1"/>
</dbReference>
<dbReference type="NCBIfam" id="TIGR03632">
    <property type="entry name" value="uS11_bact"/>
    <property type="match status" value="1"/>
</dbReference>
<dbReference type="PANTHER" id="PTHR11759">
    <property type="entry name" value="40S RIBOSOMAL PROTEIN S14/30S RIBOSOMAL PROTEIN S11"/>
    <property type="match status" value="1"/>
</dbReference>
<dbReference type="Pfam" id="PF00411">
    <property type="entry name" value="Ribosomal_S11"/>
    <property type="match status" value="1"/>
</dbReference>
<dbReference type="PIRSF" id="PIRSF002131">
    <property type="entry name" value="Ribosomal_S11"/>
    <property type="match status" value="1"/>
</dbReference>
<dbReference type="SUPFAM" id="SSF53137">
    <property type="entry name" value="Translational machinery components"/>
    <property type="match status" value="1"/>
</dbReference>
<dbReference type="PROSITE" id="PS00054">
    <property type="entry name" value="RIBOSOMAL_S11"/>
    <property type="match status" value="1"/>
</dbReference>
<feature type="chain" id="PRO_0000123183" description="Small ribosomal subunit protein uS11">
    <location>
        <begin position="1"/>
        <end position="136"/>
    </location>
</feature>
<feature type="region of interest" description="Disordered" evidence="2">
    <location>
        <begin position="1"/>
        <end position="20"/>
    </location>
</feature>
<feature type="region of interest" description="Disordered" evidence="2">
    <location>
        <begin position="115"/>
        <end position="136"/>
    </location>
</feature>
<feature type="compositionally biased region" description="Basic residues" evidence="2">
    <location>
        <begin position="125"/>
        <end position="136"/>
    </location>
</feature>
<gene>
    <name evidence="1" type="primary">rpsK</name>
    <name type="ordered locus">MYPU_5620</name>
</gene>
<comment type="function">
    <text evidence="1">Located on the platform of the 30S subunit, it bridges several disparate RNA helices of the 16S rRNA. Forms part of the Shine-Dalgarno cleft in the 70S ribosome.</text>
</comment>
<comment type="subunit">
    <text evidence="1">Part of the 30S ribosomal subunit. Interacts with proteins S7 and S18. Binds to IF-3.</text>
</comment>
<comment type="similarity">
    <text evidence="1">Belongs to the universal ribosomal protein uS11 family.</text>
</comment>